<sequence>MTEEINIDTATLEQLRDVLTNKSGDVKLANRFRALFNLKCVGAESENQDEVHKAIDYIAESFKDDSELLKHEVAYVLGQTKNLHAAQYLRSVLENNNQQIMVRHEAAEALGALGDKDSLALLEDYFKNDPSIEIKQTCELAIERIRWENSEKAKAENLETSLYTSIDPAPPMPSDQESKVEKLQKILNNQDEPLFERYRAMFRLRDMGTDEACLALASGLDDDPSALFKHEIAYVFGQLCNPVTVPALIKTLKDEREAAMVRHEAAEALGSIATDECLPVLQSFLNDKDQVVRDSAVVALDMYEYENSTEI</sequence>
<comment type="function">
    <text evidence="1">Catalyzes the hydroxylation of the N(6)-(4-aminobutyl)-L-lysine intermediate to form hypusine, an essential post-translational modification only found in mature eIF-5A factor.</text>
</comment>
<comment type="catalytic activity">
    <reaction evidence="1">
        <text>[eIF5A protein]-deoxyhypusine + AH2 + O2 = [eIF5A protein]-hypusine + A + H2O</text>
        <dbReference type="Rhea" id="RHEA:14101"/>
        <dbReference type="Rhea" id="RHEA-COMP:10144"/>
        <dbReference type="Rhea" id="RHEA-COMP:12592"/>
        <dbReference type="ChEBI" id="CHEBI:13193"/>
        <dbReference type="ChEBI" id="CHEBI:15377"/>
        <dbReference type="ChEBI" id="CHEBI:15379"/>
        <dbReference type="ChEBI" id="CHEBI:17499"/>
        <dbReference type="ChEBI" id="CHEBI:82657"/>
        <dbReference type="ChEBI" id="CHEBI:91175"/>
        <dbReference type="EC" id="1.14.99.29"/>
    </reaction>
</comment>
<comment type="cofactor">
    <cofactor evidence="1">
        <name>Fe(2+)</name>
        <dbReference type="ChEBI" id="CHEBI:29033"/>
    </cofactor>
    <text evidence="1">Binds 2 Fe(2+) ions per subunit.</text>
</comment>
<comment type="pathway">
    <text evidence="1">Protein modification; eIF5A hypusination.</text>
</comment>
<comment type="subcellular location">
    <subcellularLocation>
        <location evidence="1">Cytoplasm</location>
    </subcellularLocation>
    <subcellularLocation>
        <location evidence="1">Nucleus</location>
    </subcellularLocation>
</comment>
<comment type="similarity">
    <text evidence="1">Belongs to the deoxyhypusine hydroxylase family.</text>
</comment>
<name>DOHH_DEBHA</name>
<proteinExistence type="inferred from homology"/>
<reference key="1">
    <citation type="journal article" date="2004" name="Nature">
        <title>Genome evolution in yeasts.</title>
        <authorList>
            <person name="Dujon B."/>
            <person name="Sherman D."/>
            <person name="Fischer G."/>
            <person name="Durrens P."/>
            <person name="Casaregola S."/>
            <person name="Lafontaine I."/>
            <person name="de Montigny J."/>
            <person name="Marck C."/>
            <person name="Neuveglise C."/>
            <person name="Talla E."/>
            <person name="Goffard N."/>
            <person name="Frangeul L."/>
            <person name="Aigle M."/>
            <person name="Anthouard V."/>
            <person name="Babour A."/>
            <person name="Barbe V."/>
            <person name="Barnay S."/>
            <person name="Blanchin S."/>
            <person name="Beckerich J.-M."/>
            <person name="Beyne E."/>
            <person name="Bleykasten C."/>
            <person name="Boisrame A."/>
            <person name="Boyer J."/>
            <person name="Cattolico L."/>
            <person name="Confanioleri F."/>
            <person name="de Daruvar A."/>
            <person name="Despons L."/>
            <person name="Fabre E."/>
            <person name="Fairhead C."/>
            <person name="Ferry-Dumazet H."/>
            <person name="Groppi A."/>
            <person name="Hantraye F."/>
            <person name="Hennequin C."/>
            <person name="Jauniaux N."/>
            <person name="Joyet P."/>
            <person name="Kachouri R."/>
            <person name="Kerrest A."/>
            <person name="Koszul R."/>
            <person name="Lemaire M."/>
            <person name="Lesur I."/>
            <person name="Ma L."/>
            <person name="Muller H."/>
            <person name="Nicaud J.-M."/>
            <person name="Nikolski M."/>
            <person name="Oztas S."/>
            <person name="Ozier-Kalogeropoulos O."/>
            <person name="Pellenz S."/>
            <person name="Potier S."/>
            <person name="Richard G.-F."/>
            <person name="Straub M.-L."/>
            <person name="Suleau A."/>
            <person name="Swennen D."/>
            <person name="Tekaia F."/>
            <person name="Wesolowski-Louvel M."/>
            <person name="Westhof E."/>
            <person name="Wirth B."/>
            <person name="Zeniou-Meyer M."/>
            <person name="Zivanovic Y."/>
            <person name="Bolotin-Fukuhara M."/>
            <person name="Thierry A."/>
            <person name="Bouchier C."/>
            <person name="Caudron B."/>
            <person name="Scarpelli C."/>
            <person name="Gaillardin C."/>
            <person name="Weissenbach J."/>
            <person name="Wincker P."/>
            <person name="Souciet J.-L."/>
        </authorList>
    </citation>
    <scope>NUCLEOTIDE SEQUENCE [LARGE SCALE GENOMIC DNA]</scope>
    <source>
        <strain>ATCC 36239 / CBS 767 / BCRC 21394 / JCM 1990 / NBRC 0083 / IGC 2968</strain>
    </source>
</reference>
<evidence type="ECO:0000255" key="1">
    <source>
        <dbReference type="HAMAP-Rule" id="MF_03101"/>
    </source>
</evidence>
<organism>
    <name type="scientific">Debaryomyces hansenii (strain ATCC 36239 / CBS 767 / BCRC 21394 / JCM 1990 / NBRC 0083 / IGC 2968)</name>
    <name type="common">Yeast</name>
    <name type="synonym">Torulaspora hansenii</name>
    <dbReference type="NCBI Taxonomy" id="284592"/>
    <lineage>
        <taxon>Eukaryota</taxon>
        <taxon>Fungi</taxon>
        <taxon>Dikarya</taxon>
        <taxon>Ascomycota</taxon>
        <taxon>Saccharomycotina</taxon>
        <taxon>Pichiomycetes</taxon>
        <taxon>Debaryomycetaceae</taxon>
        <taxon>Debaryomyces</taxon>
    </lineage>
</organism>
<protein>
    <recommendedName>
        <fullName evidence="1">Deoxyhypusine hydroxylase</fullName>
        <shortName evidence="1">DOHH</shortName>
        <ecNumber evidence="1">1.14.99.29</ecNumber>
    </recommendedName>
    <alternativeName>
        <fullName evidence="1">Deoxyhypusine dioxygenase</fullName>
    </alternativeName>
    <alternativeName>
        <fullName evidence="1">Deoxyhypusine monooxygenase</fullName>
    </alternativeName>
</protein>
<accession>Q6BKA6</accession>
<dbReference type="EC" id="1.14.99.29" evidence="1"/>
<dbReference type="EMBL" id="CR382138">
    <property type="protein sequence ID" value="CAG89771.1"/>
    <property type="molecule type" value="Genomic_DNA"/>
</dbReference>
<dbReference type="RefSeq" id="XP_461365.1">
    <property type="nucleotide sequence ID" value="XM_461365.1"/>
</dbReference>
<dbReference type="SMR" id="Q6BKA6"/>
<dbReference type="FunCoup" id="Q6BKA6">
    <property type="interactions" value="947"/>
</dbReference>
<dbReference type="STRING" id="284592.Q6BKA6"/>
<dbReference type="GeneID" id="2903920"/>
<dbReference type="KEGG" id="dha:DEHA2F23518g"/>
<dbReference type="VEuPathDB" id="FungiDB:DEHA2F23518g"/>
<dbReference type="eggNOG" id="KOG0567">
    <property type="taxonomic scope" value="Eukaryota"/>
</dbReference>
<dbReference type="HOGENOM" id="CLU_053974_0_0_1"/>
<dbReference type="InParanoid" id="Q6BKA6"/>
<dbReference type="OMA" id="LQEPCSI"/>
<dbReference type="OrthoDB" id="421002at2759"/>
<dbReference type="UniPathway" id="UPA00354"/>
<dbReference type="Proteomes" id="UP000000599">
    <property type="component" value="Chromosome F"/>
</dbReference>
<dbReference type="GO" id="GO:0005737">
    <property type="term" value="C:cytoplasm"/>
    <property type="evidence" value="ECO:0007669"/>
    <property type="project" value="UniProtKB-SubCell"/>
</dbReference>
<dbReference type="GO" id="GO:0005634">
    <property type="term" value="C:nucleus"/>
    <property type="evidence" value="ECO:0007669"/>
    <property type="project" value="UniProtKB-SubCell"/>
</dbReference>
<dbReference type="GO" id="GO:0019135">
    <property type="term" value="F:deoxyhypusine monooxygenase activity"/>
    <property type="evidence" value="ECO:0007669"/>
    <property type="project" value="UniProtKB-UniRule"/>
</dbReference>
<dbReference type="GO" id="GO:0046872">
    <property type="term" value="F:metal ion binding"/>
    <property type="evidence" value="ECO:0007669"/>
    <property type="project" value="UniProtKB-KW"/>
</dbReference>
<dbReference type="GO" id="GO:0000226">
    <property type="term" value="P:microtubule cytoskeleton organization"/>
    <property type="evidence" value="ECO:0007669"/>
    <property type="project" value="EnsemblFungi"/>
</dbReference>
<dbReference type="FunFam" id="1.25.10.10:FF:000099">
    <property type="entry name" value="Deoxyhypusine hydroxylase"/>
    <property type="match status" value="1"/>
</dbReference>
<dbReference type="Gene3D" id="1.25.10.10">
    <property type="entry name" value="Leucine-rich Repeat Variant"/>
    <property type="match status" value="2"/>
</dbReference>
<dbReference type="HAMAP" id="MF_03101">
    <property type="entry name" value="Deoxyhypusine_hydroxylase"/>
    <property type="match status" value="1"/>
</dbReference>
<dbReference type="InterPro" id="IPR011989">
    <property type="entry name" value="ARM-like"/>
</dbReference>
<dbReference type="InterPro" id="IPR016024">
    <property type="entry name" value="ARM-type_fold"/>
</dbReference>
<dbReference type="InterPro" id="IPR027517">
    <property type="entry name" value="Deoxyhypusine_hydroxylase"/>
</dbReference>
<dbReference type="InterPro" id="IPR021133">
    <property type="entry name" value="HEAT_type_2"/>
</dbReference>
<dbReference type="InterPro" id="IPR004155">
    <property type="entry name" value="PBS_lyase_HEAT"/>
</dbReference>
<dbReference type="PANTHER" id="PTHR12697:SF5">
    <property type="entry name" value="DEOXYHYPUSINE HYDROXYLASE"/>
    <property type="match status" value="1"/>
</dbReference>
<dbReference type="PANTHER" id="PTHR12697">
    <property type="entry name" value="PBS LYASE HEAT-LIKE PROTEIN"/>
    <property type="match status" value="1"/>
</dbReference>
<dbReference type="Pfam" id="PF13646">
    <property type="entry name" value="HEAT_2"/>
    <property type="match status" value="2"/>
</dbReference>
<dbReference type="SMART" id="SM00567">
    <property type="entry name" value="EZ_HEAT"/>
    <property type="match status" value="5"/>
</dbReference>
<dbReference type="SUPFAM" id="SSF48371">
    <property type="entry name" value="ARM repeat"/>
    <property type="match status" value="1"/>
</dbReference>
<dbReference type="PROSITE" id="PS50077">
    <property type="entry name" value="HEAT_REPEAT"/>
    <property type="match status" value="1"/>
</dbReference>
<keyword id="KW-0963">Cytoplasm</keyword>
<keyword id="KW-0386">Hypusine biosynthesis</keyword>
<keyword id="KW-0408">Iron</keyword>
<keyword id="KW-0479">Metal-binding</keyword>
<keyword id="KW-0503">Monooxygenase</keyword>
<keyword id="KW-0539">Nucleus</keyword>
<keyword id="KW-0560">Oxidoreductase</keyword>
<keyword id="KW-1185">Reference proteome</keyword>
<keyword id="KW-0677">Repeat</keyword>
<feature type="chain" id="PRO_0000283663" description="Deoxyhypusine hydroxylase">
    <location>
        <begin position="1"/>
        <end position="311"/>
    </location>
</feature>
<feature type="repeat" description="HEAT-like PBS-type 1">
    <location>
        <begin position="69"/>
        <end position="95"/>
    </location>
</feature>
<feature type="repeat" description="HEAT-like PBS-type 2">
    <location>
        <begin position="102"/>
        <end position="128"/>
    </location>
</feature>
<feature type="repeat" description="HEAT-like PBS-type 3">
    <location>
        <begin position="196"/>
        <end position="222"/>
    </location>
</feature>
<feature type="repeat" description="HEAT-like PBS-type 4">
    <location>
        <begin position="228"/>
        <end position="254"/>
    </location>
</feature>
<feature type="repeat" description="HEAT-like PBS-type 5">
    <location>
        <begin position="261"/>
        <end position="287"/>
    </location>
</feature>
<feature type="binding site" evidence="1">
    <location>
        <position position="71"/>
    </location>
    <ligand>
        <name>Fe cation</name>
        <dbReference type="ChEBI" id="CHEBI:24875"/>
        <label>1</label>
    </ligand>
</feature>
<feature type="binding site" evidence="1">
    <location>
        <position position="72"/>
    </location>
    <ligand>
        <name>Fe cation</name>
        <dbReference type="ChEBI" id="CHEBI:24875"/>
        <label>1</label>
    </ligand>
</feature>
<feature type="binding site" evidence="1">
    <location>
        <position position="104"/>
    </location>
    <ligand>
        <name>Fe cation</name>
        <dbReference type="ChEBI" id="CHEBI:24875"/>
        <label>1</label>
    </ligand>
</feature>
<feature type="binding site" evidence="1">
    <location>
        <position position="105"/>
    </location>
    <ligand>
        <name>Fe cation</name>
        <dbReference type="ChEBI" id="CHEBI:24875"/>
        <label>1</label>
    </ligand>
</feature>
<feature type="binding site" evidence="1">
    <location>
        <position position="230"/>
    </location>
    <ligand>
        <name>Fe cation</name>
        <dbReference type="ChEBI" id="CHEBI:24875"/>
        <label>2</label>
    </ligand>
</feature>
<feature type="binding site" evidence="1">
    <location>
        <position position="231"/>
    </location>
    <ligand>
        <name>Fe cation</name>
        <dbReference type="ChEBI" id="CHEBI:24875"/>
        <label>2</label>
    </ligand>
</feature>
<feature type="binding site" evidence="1">
    <location>
        <position position="263"/>
    </location>
    <ligand>
        <name>Fe cation</name>
        <dbReference type="ChEBI" id="CHEBI:24875"/>
        <label>2</label>
    </ligand>
</feature>
<feature type="binding site" evidence="1">
    <location>
        <position position="264"/>
    </location>
    <ligand>
        <name>Fe cation</name>
        <dbReference type="ChEBI" id="CHEBI:24875"/>
        <label>2</label>
    </ligand>
</feature>
<gene>
    <name evidence="1" type="primary">LIA1</name>
    <name type="ordered locus">DEHA2F23518g</name>
</gene>